<protein>
    <recommendedName>
        <fullName evidence="1">Ribonuclease Z</fullName>
        <shortName evidence="1">RNase Z</shortName>
        <ecNumber evidence="1">3.1.26.11</ecNumber>
    </recommendedName>
    <alternativeName>
        <fullName evidence="1">tRNA 3 endonuclease</fullName>
    </alternativeName>
    <alternativeName>
        <fullName evidence="1">tRNase Z</fullName>
    </alternativeName>
</protein>
<gene>
    <name evidence="1" type="primary">rnz</name>
    <name type="ordered locus">SP_0674</name>
</gene>
<organism>
    <name type="scientific">Streptococcus pneumoniae serotype 4 (strain ATCC BAA-334 / TIGR4)</name>
    <dbReference type="NCBI Taxonomy" id="170187"/>
    <lineage>
        <taxon>Bacteria</taxon>
        <taxon>Bacillati</taxon>
        <taxon>Bacillota</taxon>
        <taxon>Bacilli</taxon>
        <taxon>Lactobacillales</taxon>
        <taxon>Streptococcaceae</taxon>
        <taxon>Streptococcus</taxon>
    </lineage>
</organism>
<feature type="chain" id="PRO_0000155906" description="Ribonuclease Z">
    <location>
        <begin position="1"/>
        <end position="309"/>
    </location>
</feature>
<feature type="active site" description="Proton acceptor" evidence="1">
    <location>
        <position position="67"/>
    </location>
</feature>
<feature type="binding site" evidence="1">
    <location>
        <position position="63"/>
    </location>
    <ligand>
        <name>Zn(2+)</name>
        <dbReference type="ChEBI" id="CHEBI:29105"/>
        <label>1</label>
        <note>catalytic</note>
    </ligand>
</feature>
<feature type="binding site" evidence="1">
    <location>
        <position position="65"/>
    </location>
    <ligand>
        <name>Zn(2+)</name>
        <dbReference type="ChEBI" id="CHEBI:29105"/>
        <label>1</label>
        <note>catalytic</note>
    </ligand>
</feature>
<feature type="binding site" evidence="1">
    <location>
        <position position="67"/>
    </location>
    <ligand>
        <name>Zn(2+)</name>
        <dbReference type="ChEBI" id="CHEBI:29105"/>
        <label>2</label>
        <note>catalytic</note>
    </ligand>
</feature>
<feature type="binding site" evidence="1">
    <location>
        <position position="68"/>
    </location>
    <ligand>
        <name>Zn(2+)</name>
        <dbReference type="ChEBI" id="CHEBI:29105"/>
        <label>2</label>
        <note>catalytic</note>
    </ligand>
</feature>
<feature type="binding site" evidence="1">
    <location>
        <position position="145"/>
    </location>
    <ligand>
        <name>Zn(2+)</name>
        <dbReference type="ChEBI" id="CHEBI:29105"/>
        <label>1</label>
        <note>catalytic</note>
    </ligand>
</feature>
<feature type="binding site" evidence="1">
    <location>
        <position position="216"/>
    </location>
    <ligand>
        <name>Zn(2+)</name>
        <dbReference type="ChEBI" id="CHEBI:29105"/>
        <label>1</label>
        <note>catalytic</note>
    </ligand>
</feature>
<feature type="binding site" evidence="1">
    <location>
        <position position="216"/>
    </location>
    <ligand>
        <name>Zn(2+)</name>
        <dbReference type="ChEBI" id="CHEBI:29105"/>
        <label>2</label>
        <note>catalytic</note>
    </ligand>
</feature>
<feature type="binding site" evidence="1">
    <location>
        <position position="274"/>
    </location>
    <ligand>
        <name>Zn(2+)</name>
        <dbReference type="ChEBI" id="CHEBI:29105"/>
        <label>2</label>
        <note>catalytic</note>
    </ligand>
</feature>
<keyword id="KW-0255">Endonuclease</keyword>
<keyword id="KW-0378">Hydrolase</keyword>
<keyword id="KW-0479">Metal-binding</keyword>
<keyword id="KW-0540">Nuclease</keyword>
<keyword id="KW-1185">Reference proteome</keyword>
<keyword id="KW-0819">tRNA processing</keyword>
<keyword id="KW-0862">Zinc</keyword>
<name>RNZ_STRPN</name>
<reference key="1">
    <citation type="journal article" date="2001" name="Science">
        <title>Complete genome sequence of a virulent isolate of Streptococcus pneumoniae.</title>
        <authorList>
            <person name="Tettelin H."/>
            <person name="Nelson K.E."/>
            <person name="Paulsen I.T."/>
            <person name="Eisen J.A."/>
            <person name="Read T.D."/>
            <person name="Peterson S.N."/>
            <person name="Heidelberg J.F."/>
            <person name="DeBoy R.T."/>
            <person name="Haft D.H."/>
            <person name="Dodson R.J."/>
            <person name="Durkin A.S."/>
            <person name="Gwinn M.L."/>
            <person name="Kolonay J.F."/>
            <person name="Nelson W.C."/>
            <person name="Peterson J.D."/>
            <person name="Umayam L.A."/>
            <person name="White O."/>
            <person name="Salzberg S.L."/>
            <person name="Lewis M.R."/>
            <person name="Radune D."/>
            <person name="Holtzapple E.K."/>
            <person name="Khouri H.M."/>
            <person name="Wolf A.M."/>
            <person name="Utterback T.R."/>
            <person name="Hansen C.L."/>
            <person name="McDonald L.A."/>
            <person name="Feldblyum T.V."/>
            <person name="Angiuoli S.V."/>
            <person name="Dickinson T."/>
            <person name="Hickey E.K."/>
            <person name="Holt I.E."/>
            <person name="Loftus B.J."/>
            <person name="Yang F."/>
            <person name="Smith H.O."/>
            <person name="Venter J.C."/>
            <person name="Dougherty B.A."/>
            <person name="Morrison D.A."/>
            <person name="Hollingshead S.K."/>
            <person name="Fraser C.M."/>
        </authorList>
    </citation>
    <scope>NUCLEOTIDE SEQUENCE [LARGE SCALE GENOMIC DNA]</scope>
    <source>
        <strain>ATCC BAA-334 / TIGR4</strain>
    </source>
</reference>
<accession>Q97RW2</accession>
<sequence>MDIQFLGTGAGQPSKARNVSSLALKLLDEINEVWLFDCGEGTQNRILETTIRPRKVSKIFITHLHGDHIFGLPGFLSSRAFQANEEQTDLEIYGPQGIKSFVLTSLRVSGSRLPYRIHFHEFDQDSLGKILETDKFTVYAEELDHTIFCVGYRVMQKDLEGTLDAEKLKAAGVPFGPLFGKIKNGQDLVLEDGTEIKAADYISAPRPGKIITILGDTRKTGASVRLAVNADVLVHESTYGKGDEKIARNHGHSTNMQAAQVAVEAGAKRLLLNHISARFLSKDISKLKKDAATIFENVHVVKDLEEVEI</sequence>
<comment type="function">
    <text evidence="1">Zinc phosphodiesterase, which displays some tRNA 3'-processing endonuclease activity. Probably involved in tRNA maturation, by removing a 3'-trailer from precursor tRNA.</text>
</comment>
<comment type="catalytic activity">
    <reaction evidence="1">
        <text>Endonucleolytic cleavage of RNA, removing extra 3' nucleotides from tRNA precursor, generating 3' termini of tRNAs. A 3'-hydroxy group is left at the tRNA terminus and a 5'-phosphoryl group is left at the trailer molecule.</text>
        <dbReference type="EC" id="3.1.26.11"/>
    </reaction>
</comment>
<comment type="cofactor">
    <cofactor evidence="1">
        <name>Zn(2+)</name>
        <dbReference type="ChEBI" id="CHEBI:29105"/>
    </cofactor>
    <text evidence="1">Binds 2 Zn(2+) ions.</text>
</comment>
<comment type="subunit">
    <text evidence="1">Homodimer.</text>
</comment>
<comment type="similarity">
    <text evidence="1">Belongs to the RNase Z family.</text>
</comment>
<evidence type="ECO:0000255" key="1">
    <source>
        <dbReference type="HAMAP-Rule" id="MF_01818"/>
    </source>
</evidence>
<dbReference type="EC" id="3.1.26.11" evidence="1"/>
<dbReference type="EMBL" id="AE005672">
    <property type="protein sequence ID" value="AAK74819.1"/>
    <property type="molecule type" value="Genomic_DNA"/>
</dbReference>
<dbReference type="PIR" id="B95078">
    <property type="entry name" value="B95078"/>
</dbReference>
<dbReference type="RefSeq" id="WP_000354338.1">
    <property type="nucleotide sequence ID" value="NZ_CP155539.1"/>
</dbReference>
<dbReference type="SMR" id="Q97RW2"/>
<dbReference type="PaxDb" id="170187-SP_0674"/>
<dbReference type="EnsemblBacteria" id="AAK74819">
    <property type="protein sequence ID" value="AAK74819"/>
    <property type="gene ID" value="SP_0674"/>
</dbReference>
<dbReference type="KEGG" id="spn:SP_0674"/>
<dbReference type="eggNOG" id="COG1234">
    <property type="taxonomic scope" value="Bacteria"/>
</dbReference>
<dbReference type="PhylomeDB" id="Q97RW2"/>
<dbReference type="BioCyc" id="SPNE170187:G1FZB-697-MONOMER"/>
<dbReference type="Proteomes" id="UP000000585">
    <property type="component" value="Chromosome"/>
</dbReference>
<dbReference type="GO" id="GO:0042781">
    <property type="term" value="F:3'-tRNA processing endoribonuclease activity"/>
    <property type="evidence" value="ECO:0007669"/>
    <property type="project" value="UniProtKB-UniRule"/>
</dbReference>
<dbReference type="GO" id="GO:0008270">
    <property type="term" value="F:zinc ion binding"/>
    <property type="evidence" value="ECO:0007669"/>
    <property type="project" value="UniProtKB-UniRule"/>
</dbReference>
<dbReference type="CDD" id="cd07717">
    <property type="entry name" value="RNaseZ_ZiPD-like_MBL-fold"/>
    <property type="match status" value="1"/>
</dbReference>
<dbReference type="FunFam" id="3.60.15.10:FF:000002">
    <property type="entry name" value="Ribonuclease Z"/>
    <property type="match status" value="1"/>
</dbReference>
<dbReference type="Gene3D" id="3.60.15.10">
    <property type="entry name" value="Ribonuclease Z/Hydroxyacylglutathione hydrolase-like"/>
    <property type="match status" value="1"/>
</dbReference>
<dbReference type="HAMAP" id="MF_01818">
    <property type="entry name" value="RNase_Z_BN"/>
    <property type="match status" value="1"/>
</dbReference>
<dbReference type="InterPro" id="IPR001279">
    <property type="entry name" value="Metallo-B-lactamas"/>
</dbReference>
<dbReference type="InterPro" id="IPR036866">
    <property type="entry name" value="RibonucZ/Hydroxyglut_hydro"/>
</dbReference>
<dbReference type="InterPro" id="IPR013471">
    <property type="entry name" value="RNase_Z/BN"/>
</dbReference>
<dbReference type="NCBIfam" id="NF000801">
    <property type="entry name" value="PRK00055.1-3"/>
    <property type="match status" value="1"/>
</dbReference>
<dbReference type="NCBIfam" id="TIGR02651">
    <property type="entry name" value="RNase_Z"/>
    <property type="match status" value="1"/>
</dbReference>
<dbReference type="PANTHER" id="PTHR46018">
    <property type="entry name" value="ZINC PHOSPHODIESTERASE ELAC PROTEIN 1"/>
    <property type="match status" value="1"/>
</dbReference>
<dbReference type="PANTHER" id="PTHR46018:SF2">
    <property type="entry name" value="ZINC PHOSPHODIESTERASE ELAC PROTEIN 1"/>
    <property type="match status" value="1"/>
</dbReference>
<dbReference type="Pfam" id="PF00753">
    <property type="entry name" value="Lactamase_B"/>
    <property type="match status" value="1"/>
</dbReference>
<dbReference type="SUPFAM" id="SSF56281">
    <property type="entry name" value="Metallo-hydrolase/oxidoreductase"/>
    <property type="match status" value="1"/>
</dbReference>
<proteinExistence type="inferred from homology"/>